<feature type="chain" id="PRO_0000338428" description="Probable calcium-binding protein CML13">
    <location>
        <begin position="1"/>
        <end position="169"/>
    </location>
</feature>
<feature type="domain" description="EF-hand 1" evidence="2">
    <location>
        <begin position="24"/>
        <end position="59"/>
    </location>
</feature>
<feature type="domain" description="EF-hand 2" evidence="2">
    <location>
        <begin position="60"/>
        <end position="95"/>
    </location>
</feature>
<feature type="domain" description="EF-hand 3" evidence="2">
    <location>
        <begin position="97"/>
        <end position="132"/>
    </location>
</feature>
<feature type="domain" description="EF-hand 4" evidence="2">
    <location>
        <begin position="133"/>
        <end position="168"/>
    </location>
</feature>
<feature type="region of interest" description="Disordered" evidence="3">
    <location>
        <begin position="1"/>
        <end position="26"/>
    </location>
</feature>
<feature type="compositionally biased region" description="Basic residues" evidence="3">
    <location>
        <begin position="15"/>
        <end position="24"/>
    </location>
</feature>
<feature type="binding site" evidence="2">
    <location>
        <position position="37"/>
    </location>
    <ligand>
        <name>Ca(2+)</name>
        <dbReference type="ChEBI" id="CHEBI:29108"/>
        <label>1</label>
    </ligand>
</feature>
<feature type="binding site" evidence="2">
    <location>
        <position position="39"/>
    </location>
    <ligand>
        <name>Ca(2+)</name>
        <dbReference type="ChEBI" id="CHEBI:29108"/>
        <label>1</label>
    </ligand>
</feature>
<feature type="binding site" evidence="2">
    <location>
        <position position="41"/>
    </location>
    <ligand>
        <name>Ca(2+)</name>
        <dbReference type="ChEBI" id="CHEBI:29108"/>
        <label>1</label>
    </ligand>
</feature>
<feature type="binding site" evidence="2">
    <location>
        <position position="43"/>
    </location>
    <ligand>
        <name>Ca(2+)</name>
        <dbReference type="ChEBI" id="CHEBI:29108"/>
        <label>1</label>
    </ligand>
</feature>
<feature type="binding site" evidence="2">
    <location>
        <position position="48"/>
    </location>
    <ligand>
        <name>Ca(2+)</name>
        <dbReference type="ChEBI" id="CHEBI:29108"/>
        <label>1</label>
    </ligand>
</feature>
<feature type="binding site" evidence="2">
    <location>
        <position position="73"/>
    </location>
    <ligand>
        <name>Ca(2+)</name>
        <dbReference type="ChEBI" id="CHEBI:29108"/>
        <label>2</label>
    </ligand>
</feature>
<feature type="binding site" evidence="2">
    <location>
        <position position="75"/>
    </location>
    <ligand>
        <name>Ca(2+)</name>
        <dbReference type="ChEBI" id="CHEBI:29108"/>
        <label>2</label>
    </ligand>
</feature>
<feature type="binding site" evidence="2">
    <location>
        <position position="77"/>
    </location>
    <ligand>
        <name>Ca(2+)</name>
        <dbReference type="ChEBI" id="CHEBI:29108"/>
        <label>2</label>
    </ligand>
</feature>
<feature type="binding site" evidence="2">
    <location>
        <position position="79"/>
    </location>
    <ligand>
        <name>Ca(2+)</name>
        <dbReference type="ChEBI" id="CHEBI:29108"/>
        <label>2</label>
    </ligand>
</feature>
<feature type="binding site" evidence="2">
    <location>
        <position position="84"/>
    </location>
    <ligand>
        <name>Ca(2+)</name>
        <dbReference type="ChEBI" id="CHEBI:29108"/>
        <label>2</label>
    </ligand>
</feature>
<feature type="binding site" evidence="2">
    <location>
        <position position="110"/>
    </location>
    <ligand>
        <name>Ca(2+)</name>
        <dbReference type="ChEBI" id="CHEBI:29108"/>
        <label>3</label>
    </ligand>
</feature>
<feature type="binding site" evidence="2">
    <location>
        <position position="112"/>
    </location>
    <ligand>
        <name>Ca(2+)</name>
        <dbReference type="ChEBI" id="CHEBI:29108"/>
        <label>3</label>
    </ligand>
</feature>
<feature type="binding site" evidence="2">
    <location>
        <position position="114"/>
    </location>
    <ligand>
        <name>Ca(2+)</name>
        <dbReference type="ChEBI" id="CHEBI:29108"/>
        <label>3</label>
    </ligand>
</feature>
<feature type="binding site" evidence="2">
    <location>
        <position position="116"/>
    </location>
    <ligand>
        <name>Ca(2+)</name>
        <dbReference type="ChEBI" id="CHEBI:29108"/>
        <label>3</label>
    </ligand>
</feature>
<feature type="binding site" evidence="2">
    <location>
        <position position="121"/>
    </location>
    <ligand>
        <name>Ca(2+)</name>
        <dbReference type="ChEBI" id="CHEBI:29108"/>
        <label>3</label>
    </ligand>
</feature>
<feature type="binding site" evidence="2">
    <location>
        <position position="146"/>
    </location>
    <ligand>
        <name>Ca(2+)</name>
        <dbReference type="ChEBI" id="CHEBI:29108"/>
        <label>4</label>
    </ligand>
</feature>
<feature type="binding site" evidence="2">
    <location>
        <position position="148"/>
    </location>
    <ligand>
        <name>Ca(2+)</name>
        <dbReference type="ChEBI" id="CHEBI:29108"/>
        <label>4</label>
    </ligand>
</feature>
<feature type="binding site" evidence="2">
    <location>
        <position position="150"/>
    </location>
    <ligand>
        <name>Ca(2+)</name>
        <dbReference type="ChEBI" id="CHEBI:29108"/>
        <label>4</label>
    </ligand>
</feature>
<feature type="binding site" evidence="2">
    <location>
        <position position="152"/>
    </location>
    <ligand>
        <name>Ca(2+)</name>
        <dbReference type="ChEBI" id="CHEBI:29108"/>
        <label>4</label>
    </ligand>
</feature>
<feature type="binding site" evidence="2">
    <location>
        <position position="157"/>
    </location>
    <ligand>
        <name>Ca(2+)</name>
        <dbReference type="ChEBI" id="CHEBI:29108"/>
        <label>4</label>
    </ligand>
</feature>
<evidence type="ECO:0000250" key="1"/>
<evidence type="ECO:0000255" key="2">
    <source>
        <dbReference type="PROSITE-ProRule" id="PRU00448"/>
    </source>
</evidence>
<evidence type="ECO:0000256" key="3">
    <source>
        <dbReference type="SAM" id="MobiDB-lite"/>
    </source>
</evidence>
<evidence type="ECO:0000305" key="4"/>
<reference key="1">
    <citation type="journal article" date="2005" name="Nature">
        <title>The map-based sequence of the rice genome.</title>
        <authorList>
            <consortium name="International rice genome sequencing project (IRGSP)"/>
        </authorList>
    </citation>
    <scope>NUCLEOTIDE SEQUENCE [LARGE SCALE GENOMIC DNA]</scope>
    <source>
        <strain>cv. Nipponbare</strain>
    </source>
</reference>
<reference key="2">
    <citation type="journal article" date="2008" name="Nucleic Acids Res.">
        <title>The rice annotation project database (RAP-DB): 2008 update.</title>
        <authorList>
            <consortium name="The rice annotation project (RAP)"/>
        </authorList>
    </citation>
    <scope>GENOME REANNOTATION</scope>
    <source>
        <strain>cv. Nipponbare</strain>
    </source>
</reference>
<reference key="3">
    <citation type="journal article" date="2013" name="Rice">
        <title>Improvement of the Oryza sativa Nipponbare reference genome using next generation sequence and optical map data.</title>
        <authorList>
            <person name="Kawahara Y."/>
            <person name="de la Bastide M."/>
            <person name="Hamilton J.P."/>
            <person name="Kanamori H."/>
            <person name="McCombie W.R."/>
            <person name="Ouyang S."/>
            <person name="Schwartz D.C."/>
            <person name="Tanaka T."/>
            <person name="Wu J."/>
            <person name="Zhou S."/>
            <person name="Childs K.L."/>
            <person name="Davidson R.M."/>
            <person name="Lin H."/>
            <person name="Quesada-Ocampo L."/>
            <person name="Vaillancourt B."/>
            <person name="Sakai H."/>
            <person name="Lee S.S."/>
            <person name="Kim J."/>
            <person name="Numa H."/>
            <person name="Itoh T."/>
            <person name="Buell C.R."/>
            <person name="Matsumoto T."/>
        </authorList>
    </citation>
    <scope>GENOME REANNOTATION</scope>
    <source>
        <strain>cv. Nipponbare</strain>
    </source>
</reference>
<reference key="4">
    <citation type="journal article" date="2003" name="Science">
        <title>Collection, mapping, and annotation of over 28,000 cDNA clones from japonica rice.</title>
        <authorList>
            <consortium name="The rice full-length cDNA consortium"/>
        </authorList>
    </citation>
    <scope>NUCLEOTIDE SEQUENCE [LARGE SCALE MRNA]</scope>
    <source>
        <strain>cv. Nipponbare</strain>
    </source>
</reference>
<reference key="5">
    <citation type="journal article" date="2007" name="BMC Plant Biol.">
        <title>Genome-wide identification and analyses of the rice calmodulin and related potential calcium sensor proteins.</title>
        <authorList>
            <person name="Boonburapong B."/>
            <person name="Buaboocha T."/>
        </authorList>
    </citation>
    <scope>GENE FAMILY</scope>
    <scope>NOMENCLATURE</scope>
</reference>
<name>CML13_ORYSJ</name>
<organism>
    <name type="scientific">Oryza sativa subsp. japonica</name>
    <name type="common">Rice</name>
    <dbReference type="NCBI Taxonomy" id="39947"/>
    <lineage>
        <taxon>Eukaryota</taxon>
        <taxon>Viridiplantae</taxon>
        <taxon>Streptophyta</taxon>
        <taxon>Embryophyta</taxon>
        <taxon>Tracheophyta</taxon>
        <taxon>Spermatophyta</taxon>
        <taxon>Magnoliopsida</taxon>
        <taxon>Liliopsida</taxon>
        <taxon>Poales</taxon>
        <taxon>Poaceae</taxon>
        <taxon>BOP clade</taxon>
        <taxon>Oryzoideae</taxon>
        <taxon>Oryzeae</taxon>
        <taxon>Oryzinae</taxon>
        <taxon>Oryza</taxon>
        <taxon>Oryza sativa</taxon>
    </lineage>
</organism>
<accession>Q7F0J0</accession>
<gene>
    <name type="primary">CML13</name>
    <name type="ordered locus">Os07g0618800</name>
    <name type="ordered locus">LOC_Os07g42660</name>
    <name type="ORF">P0552F09.133</name>
    <name type="ORF">P0560B08.106</name>
</gene>
<dbReference type="EMBL" id="AP004308">
    <property type="protein sequence ID" value="BAC79872.1"/>
    <property type="molecule type" value="Genomic_DNA"/>
</dbReference>
<dbReference type="EMBL" id="AP004309">
    <property type="protein sequence ID" value="BAC79876.1"/>
    <property type="molecule type" value="Genomic_DNA"/>
</dbReference>
<dbReference type="EMBL" id="AP008213">
    <property type="protein sequence ID" value="BAF22204.1"/>
    <property type="molecule type" value="Genomic_DNA"/>
</dbReference>
<dbReference type="EMBL" id="AP014963">
    <property type="status" value="NOT_ANNOTATED_CDS"/>
    <property type="molecule type" value="Genomic_DNA"/>
</dbReference>
<dbReference type="EMBL" id="AK074019">
    <property type="status" value="NOT_ANNOTATED_CDS"/>
    <property type="molecule type" value="mRNA"/>
</dbReference>
<dbReference type="RefSeq" id="XP_015644996.1">
    <property type="nucleotide sequence ID" value="XM_015789510.1"/>
</dbReference>
<dbReference type="SMR" id="Q7F0J0"/>
<dbReference type="FunCoup" id="Q7F0J0">
    <property type="interactions" value="945"/>
</dbReference>
<dbReference type="STRING" id="39947.Q7F0J0"/>
<dbReference type="PaxDb" id="39947-Q7F0J0"/>
<dbReference type="KEGG" id="dosa:Os07g0618800"/>
<dbReference type="eggNOG" id="KOG0028">
    <property type="taxonomic scope" value="Eukaryota"/>
</dbReference>
<dbReference type="HOGENOM" id="CLU_061288_18_0_1"/>
<dbReference type="InParanoid" id="Q7F0J0"/>
<dbReference type="OrthoDB" id="343296at2759"/>
<dbReference type="Proteomes" id="UP000000763">
    <property type="component" value="Chromosome 7"/>
</dbReference>
<dbReference type="Proteomes" id="UP000059680">
    <property type="component" value="Chromosome 7"/>
</dbReference>
<dbReference type="GO" id="GO:0005814">
    <property type="term" value="C:centriole"/>
    <property type="evidence" value="ECO:0000318"/>
    <property type="project" value="GO_Central"/>
</dbReference>
<dbReference type="GO" id="GO:0005634">
    <property type="term" value="C:nucleus"/>
    <property type="evidence" value="ECO:0000318"/>
    <property type="project" value="GO_Central"/>
</dbReference>
<dbReference type="GO" id="GO:0005509">
    <property type="term" value="F:calcium ion binding"/>
    <property type="evidence" value="ECO:0000318"/>
    <property type="project" value="GO_Central"/>
</dbReference>
<dbReference type="GO" id="GO:0000226">
    <property type="term" value="P:microtubule cytoskeleton organization"/>
    <property type="evidence" value="ECO:0000318"/>
    <property type="project" value="GO_Central"/>
</dbReference>
<dbReference type="CDD" id="cd00051">
    <property type="entry name" value="EFh"/>
    <property type="match status" value="1"/>
</dbReference>
<dbReference type="FunFam" id="1.10.238.10:FF:000268">
    <property type="entry name" value="Centrin 2"/>
    <property type="match status" value="1"/>
</dbReference>
<dbReference type="FunFam" id="1.10.238.10:FF:000256">
    <property type="entry name" value="probable calcium-binding protein CML20"/>
    <property type="match status" value="1"/>
</dbReference>
<dbReference type="Gene3D" id="1.10.238.10">
    <property type="entry name" value="EF-hand"/>
    <property type="match status" value="3"/>
</dbReference>
<dbReference type="InterPro" id="IPR050230">
    <property type="entry name" value="CALM/Myosin/TropC-like"/>
</dbReference>
<dbReference type="InterPro" id="IPR011992">
    <property type="entry name" value="EF-hand-dom_pair"/>
</dbReference>
<dbReference type="InterPro" id="IPR018247">
    <property type="entry name" value="EF_Hand_1_Ca_BS"/>
</dbReference>
<dbReference type="InterPro" id="IPR002048">
    <property type="entry name" value="EF_hand_dom"/>
</dbReference>
<dbReference type="PANTHER" id="PTHR23048:SF59">
    <property type="entry name" value="EF-HAND SUPERFAMILY PROTEIN"/>
    <property type="match status" value="1"/>
</dbReference>
<dbReference type="PANTHER" id="PTHR23048">
    <property type="entry name" value="MYOSIN LIGHT CHAIN 1, 3"/>
    <property type="match status" value="1"/>
</dbReference>
<dbReference type="Pfam" id="PF13499">
    <property type="entry name" value="EF-hand_7"/>
    <property type="match status" value="2"/>
</dbReference>
<dbReference type="SMART" id="SM00054">
    <property type="entry name" value="EFh"/>
    <property type="match status" value="4"/>
</dbReference>
<dbReference type="SUPFAM" id="SSF47473">
    <property type="entry name" value="EF-hand"/>
    <property type="match status" value="1"/>
</dbReference>
<dbReference type="PROSITE" id="PS00018">
    <property type="entry name" value="EF_HAND_1"/>
    <property type="match status" value="4"/>
</dbReference>
<dbReference type="PROSITE" id="PS50222">
    <property type="entry name" value="EF_HAND_2"/>
    <property type="match status" value="4"/>
</dbReference>
<comment type="function">
    <text evidence="1">Potential calcium sensor.</text>
</comment>
<comment type="caution">
    <text evidence="4">Although assigned as a calmodulin family member by PubMed:17263873, it only contains EF-hand domains.</text>
</comment>
<proteinExistence type="evidence at transcript level"/>
<keyword id="KW-0106">Calcium</keyword>
<keyword id="KW-0479">Metal-binding</keyword>
<keyword id="KW-1185">Reference proteome</keyword>
<keyword id="KW-0677">Repeat</keyword>
<protein>
    <recommendedName>
        <fullName>Probable calcium-binding protein CML13</fullName>
    </recommendedName>
    <alternativeName>
        <fullName>Calmodulin-like protein 13</fullName>
    </alternativeName>
</protein>
<sequence>MSTVKGQTRRERPRGARPHGLTKQKRQEIKEAFDLFDTDNSGTIDAKELNVAMRALGFEMTEEQINQMIADVDKDGSGSIDYEEFEHMMTAKIGERDSKEELTKAFSIIDQDKNGKISDVDIQRIAKELGENFTYQEIQEMVQEADRNGDGEIDFDEFIRMMRRTGYGY</sequence>